<comment type="function">
    <text evidence="1">Presumably involved in the processing and regular turnover of intracellular proteins. Catalyzes the removal of unsubstituted N-terminal amino acids from various peptides.</text>
</comment>
<comment type="catalytic activity">
    <reaction evidence="1">
        <text>Release of an N-terminal amino acid, Xaa-|-Yaa-, in which Xaa is preferably Leu, but may be other amino acids including Pro although not Arg or Lys, and Yaa may be Pro. Amino acid amides and methyl esters are also readily hydrolyzed, but rates on arylamides are exceedingly low.</text>
        <dbReference type="EC" id="3.4.11.1"/>
    </reaction>
</comment>
<comment type="catalytic activity">
    <reaction evidence="1">
        <text>Release of an N-terminal amino acid, preferentially leucine, but not glutamic or aspartic acids.</text>
        <dbReference type="EC" id="3.4.11.10"/>
    </reaction>
</comment>
<comment type="cofactor">
    <cofactor evidence="1">
        <name>Mn(2+)</name>
        <dbReference type="ChEBI" id="CHEBI:29035"/>
    </cofactor>
    <text evidence="1">Binds 2 manganese ions per subunit.</text>
</comment>
<comment type="subcellular location">
    <subcellularLocation>
        <location evidence="1">Cytoplasm</location>
    </subcellularLocation>
</comment>
<comment type="similarity">
    <text evidence="1">Belongs to the peptidase M17 family.</text>
</comment>
<name>AMPA_GEOSM</name>
<organism>
    <name type="scientific">Geobacter sp. (strain M21)</name>
    <dbReference type="NCBI Taxonomy" id="443144"/>
    <lineage>
        <taxon>Bacteria</taxon>
        <taxon>Pseudomonadati</taxon>
        <taxon>Thermodesulfobacteriota</taxon>
        <taxon>Desulfuromonadia</taxon>
        <taxon>Geobacterales</taxon>
        <taxon>Geobacteraceae</taxon>
        <taxon>Geobacter</taxon>
    </lineage>
</organism>
<sequence length="491" mass="52637">MRIEISSDNPLEHATPALVVGCFEDERGRVFEECDAALGGCLGRLAETREFTGKAGTTRLLHTLGKLPAERLLLVGLGKKADLTHERLRQAAGHAMQALRTSRAASFASTLPLASSLPRATESVAIGSLLGSYSFDLYKTKDKEQRFAFEEMTLMAPQPEREMARAVAEQAEQICRGVQLARDLVSHPGNVVTPGYLAQAARELAARHALEVRVYEQDELESLGMNALLGVGKGAAEPPRLIVLRYRGEGAKGRPVVLVGKGITFDSGGISIKPGPGMEEMKTDMAGAAAVFGTLEAAALLRLPVDLIGVVPTTENMPDGKAFKPGDVLASLSGTTIEITNTDAEGRLILCDALHFAQKFKPAAMIDLATLTGACVVALGHEASAVLGNDQRLVDALKKSGDETGERLWQLPLWDEYGEGMKSDIADIKNAGSRDGGTIKAAWFLKQFVGETRWAHLDIAGTAWSEKARPYSPKGATGVGVRLLIEYLRRK</sequence>
<dbReference type="EC" id="3.4.11.1" evidence="1"/>
<dbReference type="EC" id="3.4.11.10" evidence="1"/>
<dbReference type="EMBL" id="CP001661">
    <property type="protein sequence ID" value="ACT17572.1"/>
    <property type="molecule type" value="Genomic_DNA"/>
</dbReference>
<dbReference type="SMR" id="C6E543"/>
<dbReference type="STRING" id="443144.GM21_1516"/>
<dbReference type="KEGG" id="gem:GM21_1516"/>
<dbReference type="eggNOG" id="COG0260">
    <property type="taxonomic scope" value="Bacteria"/>
</dbReference>
<dbReference type="HOGENOM" id="CLU_013734_2_2_7"/>
<dbReference type="OrthoDB" id="9809354at2"/>
<dbReference type="GO" id="GO:0005737">
    <property type="term" value="C:cytoplasm"/>
    <property type="evidence" value="ECO:0007669"/>
    <property type="project" value="UniProtKB-SubCell"/>
</dbReference>
<dbReference type="GO" id="GO:0030145">
    <property type="term" value="F:manganese ion binding"/>
    <property type="evidence" value="ECO:0007669"/>
    <property type="project" value="UniProtKB-UniRule"/>
</dbReference>
<dbReference type="GO" id="GO:0070006">
    <property type="term" value="F:metalloaminopeptidase activity"/>
    <property type="evidence" value="ECO:0007669"/>
    <property type="project" value="InterPro"/>
</dbReference>
<dbReference type="GO" id="GO:0006508">
    <property type="term" value="P:proteolysis"/>
    <property type="evidence" value="ECO:0007669"/>
    <property type="project" value="UniProtKB-KW"/>
</dbReference>
<dbReference type="CDD" id="cd00433">
    <property type="entry name" value="Peptidase_M17"/>
    <property type="match status" value="1"/>
</dbReference>
<dbReference type="Gene3D" id="3.40.220.10">
    <property type="entry name" value="Leucine Aminopeptidase, subunit E, domain 1"/>
    <property type="match status" value="1"/>
</dbReference>
<dbReference type="Gene3D" id="3.40.630.10">
    <property type="entry name" value="Zn peptidases"/>
    <property type="match status" value="1"/>
</dbReference>
<dbReference type="HAMAP" id="MF_00181">
    <property type="entry name" value="Cytosol_peptidase_M17"/>
    <property type="match status" value="1"/>
</dbReference>
<dbReference type="InterPro" id="IPR011356">
    <property type="entry name" value="Leucine_aapep/pepB"/>
</dbReference>
<dbReference type="InterPro" id="IPR043472">
    <property type="entry name" value="Macro_dom-like"/>
</dbReference>
<dbReference type="InterPro" id="IPR000819">
    <property type="entry name" value="Peptidase_M17_C"/>
</dbReference>
<dbReference type="InterPro" id="IPR023042">
    <property type="entry name" value="Peptidase_M17_leu_NH2_pept"/>
</dbReference>
<dbReference type="InterPro" id="IPR008283">
    <property type="entry name" value="Peptidase_M17_N"/>
</dbReference>
<dbReference type="NCBIfam" id="NF002073">
    <property type="entry name" value="PRK00913.1-2"/>
    <property type="match status" value="1"/>
</dbReference>
<dbReference type="NCBIfam" id="NF002074">
    <property type="entry name" value="PRK00913.1-4"/>
    <property type="match status" value="1"/>
</dbReference>
<dbReference type="NCBIfam" id="NF002077">
    <property type="entry name" value="PRK00913.2-4"/>
    <property type="match status" value="1"/>
</dbReference>
<dbReference type="NCBIfam" id="NF002083">
    <property type="entry name" value="PRK00913.3-5"/>
    <property type="match status" value="1"/>
</dbReference>
<dbReference type="PANTHER" id="PTHR11963:SF23">
    <property type="entry name" value="CYTOSOL AMINOPEPTIDASE"/>
    <property type="match status" value="1"/>
</dbReference>
<dbReference type="PANTHER" id="PTHR11963">
    <property type="entry name" value="LEUCINE AMINOPEPTIDASE-RELATED"/>
    <property type="match status" value="1"/>
</dbReference>
<dbReference type="Pfam" id="PF00883">
    <property type="entry name" value="Peptidase_M17"/>
    <property type="match status" value="1"/>
</dbReference>
<dbReference type="Pfam" id="PF02789">
    <property type="entry name" value="Peptidase_M17_N"/>
    <property type="match status" value="1"/>
</dbReference>
<dbReference type="PRINTS" id="PR00481">
    <property type="entry name" value="LAMNOPPTDASE"/>
</dbReference>
<dbReference type="SUPFAM" id="SSF52949">
    <property type="entry name" value="Macro domain-like"/>
    <property type="match status" value="1"/>
</dbReference>
<dbReference type="SUPFAM" id="SSF53187">
    <property type="entry name" value="Zn-dependent exopeptidases"/>
    <property type="match status" value="1"/>
</dbReference>
<dbReference type="PROSITE" id="PS00631">
    <property type="entry name" value="CYTOSOL_AP"/>
    <property type="match status" value="1"/>
</dbReference>
<protein>
    <recommendedName>
        <fullName evidence="1">Probable cytosol aminopeptidase</fullName>
        <ecNumber evidence="1">3.4.11.1</ecNumber>
    </recommendedName>
    <alternativeName>
        <fullName evidence="1">Leucine aminopeptidase</fullName>
        <shortName evidence="1">LAP</shortName>
        <ecNumber evidence="1">3.4.11.10</ecNumber>
    </alternativeName>
    <alternativeName>
        <fullName evidence="1">Leucyl aminopeptidase</fullName>
    </alternativeName>
</protein>
<accession>C6E543</accession>
<keyword id="KW-0031">Aminopeptidase</keyword>
<keyword id="KW-0963">Cytoplasm</keyword>
<keyword id="KW-0378">Hydrolase</keyword>
<keyword id="KW-0464">Manganese</keyword>
<keyword id="KW-0479">Metal-binding</keyword>
<keyword id="KW-0645">Protease</keyword>
<reference key="1">
    <citation type="submission" date="2009-07" db="EMBL/GenBank/DDBJ databases">
        <title>Complete sequence of Geobacter sp. M21.</title>
        <authorList>
            <consortium name="US DOE Joint Genome Institute"/>
            <person name="Lucas S."/>
            <person name="Copeland A."/>
            <person name="Lapidus A."/>
            <person name="Glavina del Rio T."/>
            <person name="Dalin E."/>
            <person name="Tice H."/>
            <person name="Bruce D."/>
            <person name="Goodwin L."/>
            <person name="Pitluck S."/>
            <person name="Saunders E."/>
            <person name="Brettin T."/>
            <person name="Detter J.C."/>
            <person name="Han C."/>
            <person name="Larimer F."/>
            <person name="Land M."/>
            <person name="Hauser L."/>
            <person name="Kyrpides N."/>
            <person name="Ovchinnikova G."/>
            <person name="Lovley D."/>
        </authorList>
    </citation>
    <scope>NUCLEOTIDE SEQUENCE [LARGE SCALE GENOMIC DNA]</scope>
    <source>
        <strain>M21</strain>
    </source>
</reference>
<gene>
    <name evidence="1" type="primary">pepA</name>
    <name type="ordered locus">GM21_1516</name>
</gene>
<evidence type="ECO:0000255" key="1">
    <source>
        <dbReference type="HAMAP-Rule" id="MF_00181"/>
    </source>
</evidence>
<proteinExistence type="inferred from homology"/>
<feature type="chain" id="PRO_1000203828" description="Probable cytosol aminopeptidase">
    <location>
        <begin position="1"/>
        <end position="491"/>
    </location>
</feature>
<feature type="active site" evidence="1">
    <location>
        <position position="273"/>
    </location>
</feature>
<feature type="active site" evidence="1">
    <location>
        <position position="347"/>
    </location>
</feature>
<feature type="binding site" evidence="1">
    <location>
        <position position="261"/>
    </location>
    <ligand>
        <name>Mn(2+)</name>
        <dbReference type="ChEBI" id="CHEBI:29035"/>
        <label>2</label>
    </ligand>
</feature>
<feature type="binding site" evidence="1">
    <location>
        <position position="266"/>
    </location>
    <ligand>
        <name>Mn(2+)</name>
        <dbReference type="ChEBI" id="CHEBI:29035"/>
        <label>1</label>
    </ligand>
</feature>
<feature type="binding site" evidence="1">
    <location>
        <position position="266"/>
    </location>
    <ligand>
        <name>Mn(2+)</name>
        <dbReference type="ChEBI" id="CHEBI:29035"/>
        <label>2</label>
    </ligand>
</feature>
<feature type="binding site" evidence="1">
    <location>
        <position position="284"/>
    </location>
    <ligand>
        <name>Mn(2+)</name>
        <dbReference type="ChEBI" id="CHEBI:29035"/>
        <label>2</label>
    </ligand>
</feature>
<feature type="binding site" evidence="1">
    <location>
        <position position="343"/>
    </location>
    <ligand>
        <name>Mn(2+)</name>
        <dbReference type="ChEBI" id="CHEBI:29035"/>
        <label>1</label>
    </ligand>
</feature>
<feature type="binding site" evidence="1">
    <location>
        <position position="345"/>
    </location>
    <ligand>
        <name>Mn(2+)</name>
        <dbReference type="ChEBI" id="CHEBI:29035"/>
        <label>1</label>
    </ligand>
</feature>
<feature type="binding site" evidence="1">
    <location>
        <position position="345"/>
    </location>
    <ligand>
        <name>Mn(2+)</name>
        <dbReference type="ChEBI" id="CHEBI:29035"/>
        <label>2</label>
    </ligand>
</feature>